<feature type="chain" id="PRO_0000139330" description="Proline--tRNA ligase">
    <location>
        <begin position="1"/>
        <end position="572"/>
    </location>
</feature>
<keyword id="KW-0030">Aminoacyl-tRNA synthetase</keyword>
<keyword id="KW-0067">ATP-binding</keyword>
<keyword id="KW-0963">Cytoplasm</keyword>
<keyword id="KW-0436">Ligase</keyword>
<keyword id="KW-0547">Nucleotide-binding</keyword>
<keyword id="KW-0648">Protein biosynthesis</keyword>
<keyword id="KW-1185">Reference proteome</keyword>
<comment type="function">
    <text>Catalyzes the attachment of proline to tRNA(Pro) in a two-step reaction: proline is first activated by ATP to form Pro-AMP and then transferred to the acceptor end of tRNA(Pro). As ProRS can inadvertently accommodate and process non-cognate amino acids such as alanine and cysteine, to avoid such errors it has two additional distinct editing activities against alanine. One activity is designated as 'pretransfer' editing and involves the tRNA(Pro)-independent hydrolysis of activated Ala-AMP. The other activity is designated 'posttransfer' editing and involves deacylation of mischarged Ala-tRNA(Pro). The misacylated Cys-tRNA(Pro) is not edited by ProRS, but is probably edited in trans by YbaK.</text>
</comment>
<comment type="catalytic activity">
    <reaction evidence="1">
        <text>tRNA(Pro) + L-proline + ATP = L-prolyl-tRNA(Pro) + AMP + diphosphate</text>
        <dbReference type="Rhea" id="RHEA:14305"/>
        <dbReference type="Rhea" id="RHEA-COMP:9700"/>
        <dbReference type="Rhea" id="RHEA-COMP:9702"/>
        <dbReference type="ChEBI" id="CHEBI:30616"/>
        <dbReference type="ChEBI" id="CHEBI:33019"/>
        <dbReference type="ChEBI" id="CHEBI:60039"/>
        <dbReference type="ChEBI" id="CHEBI:78442"/>
        <dbReference type="ChEBI" id="CHEBI:78532"/>
        <dbReference type="ChEBI" id="CHEBI:456215"/>
        <dbReference type="EC" id="6.1.1.15"/>
    </reaction>
</comment>
<comment type="subunit">
    <text evidence="1">Homodimer. May form a tertiary complex with YbaK and t-RNA(Pro).</text>
</comment>
<comment type="subcellular location">
    <subcellularLocation>
        <location evidence="1">Cytoplasm</location>
    </subcellularLocation>
</comment>
<comment type="domain">
    <text evidence="1">Consists of three domains: the N-terminal catalytic domain, the editing domain and the C-terminal anticodon-binding domain.</text>
</comment>
<comment type="similarity">
    <text evidence="1">Belongs to the class-II aminoacyl-tRNA synthetase family. ProS type 1 subfamily.</text>
</comment>
<sequence>MRTSQYLFSTLKETPNDAQVVSHQLMLRAGMIRPMASGLYNWLPTGIRVLKKVEKVVREEMNKGGAIEVLMPVVQPAELWEESGRWDQYGPELLRFEDRGNRNFVLGPTHEEVITDLVRREVSSYKQLPLNLYQIQTKFRDEVRPRFGVMRSREFIMKDAYSFHTTQESLQATYDVMYQVYSNIFNRLGLDFRAVQADTGSIGGSASHEFQVLASSGEDDVVFSTESDFAANIELAEAIAIGERQAPTAEMCLVDTPNAKTIAELVEQFNLPIEKTVKTLIVKGADENQPLVALIIRGDHELNEIKAQKHPLVADPLEFADETEIKAKIGSGVGSLGAVNLNIPAIIDRTVALMSDFSCGANIDGKHYFNVNWERDVAIPKVFDLRNVVEGDPSPDGKGTLQIKRGIEVGHIFQLGKKYSEAMKATVQGEDGKPLVMTMGCYGIGVTRVVASAIEQHHDERGIIWPSDEIAPFTVAIVPMNMHKSEAVQKYAEELYRTLQSQGVDVIFDDRKERPGVMFADMELIGVPHMVVIGEKNLDNGEIEYKNRRTGEKEMISKDKLLSVLNEKLGNL</sequence>
<gene>
    <name evidence="1" type="primary">proS</name>
    <name type="ordered locus">HI_0729</name>
</gene>
<organism>
    <name type="scientific">Haemophilus influenzae (strain ATCC 51907 / DSM 11121 / KW20 / Rd)</name>
    <dbReference type="NCBI Taxonomy" id="71421"/>
    <lineage>
        <taxon>Bacteria</taxon>
        <taxon>Pseudomonadati</taxon>
        <taxon>Pseudomonadota</taxon>
        <taxon>Gammaproteobacteria</taxon>
        <taxon>Pasteurellales</taxon>
        <taxon>Pasteurellaceae</taxon>
        <taxon>Haemophilus</taxon>
    </lineage>
</organism>
<protein>
    <recommendedName>
        <fullName evidence="1">Proline--tRNA ligase</fullName>
        <ecNumber evidence="1">6.1.1.15</ecNumber>
    </recommendedName>
    <alternativeName>
        <fullName evidence="1">Prolyl-tRNA synthetase</fullName>
        <shortName evidence="1">ProRS</shortName>
    </alternativeName>
</protein>
<accession>P43830</accession>
<proteinExistence type="evidence at protein level"/>
<dbReference type="EC" id="6.1.1.15" evidence="1"/>
<dbReference type="EMBL" id="L42023">
    <property type="protein sequence ID" value="AAC22388.1"/>
    <property type="molecule type" value="Genomic_DNA"/>
</dbReference>
<dbReference type="PIR" id="C64089">
    <property type="entry name" value="C64089"/>
</dbReference>
<dbReference type="RefSeq" id="NP_438888.1">
    <property type="nucleotide sequence ID" value="NC_000907.1"/>
</dbReference>
<dbReference type="SMR" id="P43830"/>
<dbReference type="STRING" id="71421.HI_0729"/>
<dbReference type="EnsemblBacteria" id="AAC22388">
    <property type="protein sequence ID" value="AAC22388"/>
    <property type="gene ID" value="HI_0729"/>
</dbReference>
<dbReference type="KEGG" id="hin:HI_0729"/>
<dbReference type="PATRIC" id="fig|71421.8.peg.763"/>
<dbReference type="eggNOG" id="COG0442">
    <property type="taxonomic scope" value="Bacteria"/>
</dbReference>
<dbReference type="HOGENOM" id="CLU_016739_0_0_6"/>
<dbReference type="OrthoDB" id="9809052at2"/>
<dbReference type="PhylomeDB" id="P43830"/>
<dbReference type="BioCyc" id="HINF71421:G1GJ1-769-MONOMER"/>
<dbReference type="Proteomes" id="UP000000579">
    <property type="component" value="Chromosome"/>
</dbReference>
<dbReference type="GO" id="GO:0005829">
    <property type="term" value="C:cytosol"/>
    <property type="evidence" value="ECO:0000318"/>
    <property type="project" value="GO_Central"/>
</dbReference>
<dbReference type="GO" id="GO:0002161">
    <property type="term" value="F:aminoacyl-tRNA deacylase activity"/>
    <property type="evidence" value="ECO:0007669"/>
    <property type="project" value="InterPro"/>
</dbReference>
<dbReference type="GO" id="GO:0005524">
    <property type="term" value="F:ATP binding"/>
    <property type="evidence" value="ECO:0007669"/>
    <property type="project" value="UniProtKB-UniRule"/>
</dbReference>
<dbReference type="GO" id="GO:0004827">
    <property type="term" value="F:proline-tRNA ligase activity"/>
    <property type="evidence" value="ECO:0000318"/>
    <property type="project" value="GO_Central"/>
</dbReference>
<dbReference type="GO" id="GO:0006433">
    <property type="term" value="P:prolyl-tRNA aminoacylation"/>
    <property type="evidence" value="ECO:0000318"/>
    <property type="project" value="GO_Central"/>
</dbReference>
<dbReference type="CDD" id="cd04334">
    <property type="entry name" value="ProRS-INS"/>
    <property type="match status" value="1"/>
</dbReference>
<dbReference type="CDD" id="cd00861">
    <property type="entry name" value="ProRS_anticodon_short"/>
    <property type="match status" value="1"/>
</dbReference>
<dbReference type="CDD" id="cd00779">
    <property type="entry name" value="ProRS_core_prok"/>
    <property type="match status" value="1"/>
</dbReference>
<dbReference type="FunFam" id="3.30.930.10:FF:000043">
    <property type="entry name" value="Proline--tRNA ligase"/>
    <property type="match status" value="1"/>
</dbReference>
<dbReference type="FunFam" id="3.30.930.10:FF:000097">
    <property type="entry name" value="Proline--tRNA ligase"/>
    <property type="match status" value="1"/>
</dbReference>
<dbReference type="FunFam" id="3.40.50.800:FF:000057">
    <property type="entry name" value="Proline--tRNA ligase"/>
    <property type="match status" value="1"/>
</dbReference>
<dbReference type="Gene3D" id="3.40.50.800">
    <property type="entry name" value="Anticodon-binding domain"/>
    <property type="match status" value="1"/>
</dbReference>
<dbReference type="Gene3D" id="3.30.930.10">
    <property type="entry name" value="Bira Bifunctional Protein, Domain 2"/>
    <property type="match status" value="2"/>
</dbReference>
<dbReference type="HAMAP" id="MF_01569">
    <property type="entry name" value="Pro_tRNA_synth_type1"/>
    <property type="match status" value="1"/>
</dbReference>
<dbReference type="InterPro" id="IPR002314">
    <property type="entry name" value="aa-tRNA-synt_IIb"/>
</dbReference>
<dbReference type="InterPro" id="IPR006195">
    <property type="entry name" value="aa-tRNA-synth_II"/>
</dbReference>
<dbReference type="InterPro" id="IPR045864">
    <property type="entry name" value="aa-tRNA-synth_II/BPL/LPL"/>
</dbReference>
<dbReference type="InterPro" id="IPR004154">
    <property type="entry name" value="Anticodon-bd"/>
</dbReference>
<dbReference type="InterPro" id="IPR036621">
    <property type="entry name" value="Anticodon-bd_dom_sf"/>
</dbReference>
<dbReference type="InterPro" id="IPR002316">
    <property type="entry name" value="Pro-tRNA-ligase_IIa"/>
</dbReference>
<dbReference type="InterPro" id="IPR004500">
    <property type="entry name" value="Pro-tRNA-synth_IIa_bac-type"/>
</dbReference>
<dbReference type="InterPro" id="IPR023717">
    <property type="entry name" value="Pro-tRNA-Synthase_IIa_type1"/>
</dbReference>
<dbReference type="InterPro" id="IPR050062">
    <property type="entry name" value="Pro-tRNA_synthetase"/>
</dbReference>
<dbReference type="InterPro" id="IPR044140">
    <property type="entry name" value="ProRS_anticodon_short"/>
</dbReference>
<dbReference type="InterPro" id="IPR033730">
    <property type="entry name" value="ProRS_core_prok"/>
</dbReference>
<dbReference type="InterPro" id="IPR036754">
    <property type="entry name" value="YbaK/aa-tRNA-synt-asso_dom_sf"/>
</dbReference>
<dbReference type="InterPro" id="IPR007214">
    <property type="entry name" value="YbaK/aa-tRNA-synth-assoc-dom"/>
</dbReference>
<dbReference type="NCBIfam" id="NF006625">
    <property type="entry name" value="PRK09194.1"/>
    <property type="match status" value="1"/>
</dbReference>
<dbReference type="NCBIfam" id="TIGR00409">
    <property type="entry name" value="proS_fam_II"/>
    <property type="match status" value="1"/>
</dbReference>
<dbReference type="PANTHER" id="PTHR42753">
    <property type="entry name" value="MITOCHONDRIAL RIBOSOME PROTEIN L39/PROLYL-TRNA LIGASE FAMILY MEMBER"/>
    <property type="match status" value="1"/>
</dbReference>
<dbReference type="PANTHER" id="PTHR42753:SF2">
    <property type="entry name" value="PROLINE--TRNA LIGASE"/>
    <property type="match status" value="1"/>
</dbReference>
<dbReference type="Pfam" id="PF03129">
    <property type="entry name" value="HGTP_anticodon"/>
    <property type="match status" value="1"/>
</dbReference>
<dbReference type="Pfam" id="PF00587">
    <property type="entry name" value="tRNA-synt_2b"/>
    <property type="match status" value="1"/>
</dbReference>
<dbReference type="Pfam" id="PF04073">
    <property type="entry name" value="tRNA_edit"/>
    <property type="match status" value="1"/>
</dbReference>
<dbReference type="PIRSF" id="PIRSF001535">
    <property type="entry name" value="ProRS_1"/>
    <property type="match status" value="1"/>
</dbReference>
<dbReference type="PRINTS" id="PR01046">
    <property type="entry name" value="TRNASYNTHPRO"/>
</dbReference>
<dbReference type="SUPFAM" id="SSF52954">
    <property type="entry name" value="Class II aaRS ABD-related"/>
    <property type="match status" value="1"/>
</dbReference>
<dbReference type="SUPFAM" id="SSF55681">
    <property type="entry name" value="Class II aaRS and biotin synthetases"/>
    <property type="match status" value="1"/>
</dbReference>
<dbReference type="SUPFAM" id="SSF55826">
    <property type="entry name" value="YbaK/ProRS associated domain"/>
    <property type="match status" value="1"/>
</dbReference>
<dbReference type="PROSITE" id="PS50862">
    <property type="entry name" value="AA_TRNA_LIGASE_II"/>
    <property type="match status" value="1"/>
</dbReference>
<evidence type="ECO:0000255" key="1">
    <source>
        <dbReference type="HAMAP-Rule" id="MF_01569"/>
    </source>
</evidence>
<name>SYP_HAEIN</name>
<reference key="1">
    <citation type="journal article" date="1995" name="Science">
        <title>Whole-genome random sequencing and assembly of Haemophilus influenzae Rd.</title>
        <authorList>
            <person name="Fleischmann R.D."/>
            <person name="Adams M.D."/>
            <person name="White O."/>
            <person name="Clayton R.A."/>
            <person name="Kirkness E.F."/>
            <person name="Kerlavage A.R."/>
            <person name="Bult C.J."/>
            <person name="Tomb J.-F."/>
            <person name="Dougherty B.A."/>
            <person name="Merrick J.M."/>
            <person name="McKenney K."/>
            <person name="Sutton G.G."/>
            <person name="FitzHugh W."/>
            <person name="Fields C.A."/>
            <person name="Gocayne J.D."/>
            <person name="Scott J.D."/>
            <person name="Shirley R."/>
            <person name="Liu L.-I."/>
            <person name="Glodek A."/>
            <person name="Kelley J.M."/>
            <person name="Weidman J.F."/>
            <person name="Phillips C.A."/>
            <person name="Spriggs T."/>
            <person name="Hedblom E."/>
            <person name="Cotton M.D."/>
            <person name="Utterback T.R."/>
            <person name="Hanna M.C."/>
            <person name="Nguyen D.T."/>
            <person name="Saudek D.M."/>
            <person name="Brandon R.C."/>
            <person name="Fine L.D."/>
            <person name="Fritchman J.L."/>
            <person name="Fuhrmann J.L."/>
            <person name="Geoghagen N.S.M."/>
            <person name="Gnehm C.L."/>
            <person name="McDonald L.A."/>
            <person name="Small K.V."/>
            <person name="Fraser C.M."/>
            <person name="Smith H.O."/>
            <person name="Venter J.C."/>
        </authorList>
    </citation>
    <scope>NUCLEOTIDE SEQUENCE [LARGE SCALE GENOMIC DNA]</scope>
    <source>
        <strain>ATCC 51907 / DSM 11121 / KW20 / Rd</strain>
    </source>
</reference>
<reference key="2">
    <citation type="journal article" date="2005" name="J. Biol. Chem.">
        <title>Cys-tRNA(Pro) editing by Haemophilus influenzae YbaK via a novel synthetase.YbaK.tRNA ternary complex.</title>
        <authorList>
            <person name="An S."/>
            <person name="Musier-Forsyth K."/>
        </authorList>
    </citation>
    <scope>SUBUNIT</scope>
</reference>